<dbReference type="EC" id="2.7.4.3" evidence="1"/>
<dbReference type="EMBL" id="CP000099">
    <property type="protein sequence ID" value="AAZ69073.1"/>
    <property type="molecule type" value="Genomic_DNA"/>
</dbReference>
<dbReference type="SMR" id="Q46GB9"/>
<dbReference type="STRING" id="269797.Mbar_A0086"/>
<dbReference type="PaxDb" id="269797-Mbar_A0086"/>
<dbReference type="KEGG" id="mba:Mbar_A0086"/>
<dbReference type="eggNOG" id="arCOG01046">
    <property type="taxonomic scope" value="Archaea"/>
</dbReference>
<dbReference type="HOGENOM" id="CLU_032354_1_2_2"/>
<dbReference type="OrthoDB" id="31230at2157"/>
<dbReference type="UniPathway" id="UPA00588">
    <property type="reaction ID" value="UER00649"/>
</dbReference>
<dbReference type="GO" id="GO:0005737">
    <property type="term" value="C:cytoplasm"/>
    <property type="evidence" value="ECO:0007669"/>
    <property type="project" value="UniProtKB-SubCell"/>
</dbReference>
<dbReference type="GO" id="GO:0004017">
    <property type="term" value="F:adenylate kinase activity"/>
    <property type="evidence" value="ECO:0007669"/>
    <property type="project" value="UniProtKB-UniRule"/>
</dbReference>
<dbReference type="GO" id="GO:0005524">
    <property type="term" value="F:ATP binding"/>
    <property type="evidence" value="ECO:0007669"/>
    <property type="project" value="UniProtKB-UniRule"/>
</dbReference>
<dbReference type="GO" id="GO:0008270">
    <property type="term" value="F:zinc ion binding"/>
    <property type="evidence" value="ECO:0007669"/>
    <property type="project" value="UniProtKB-UniRule"/>
</dbReference>
<dbReference type="GO" id="GO:0044209">
    <property type="term" value="P:AMP salvage"/>
    <property type="evidence" value="ECO:0007669"/>
    <property type="project" value="UniProtKB-UniRule"/>
</dbReference>
<dbReference type="CDD" id="cd01428">
    <property type="entry name" value="ADK"/>
    <property type="match status" value="1"/>
</dbReference>
<dbReference type="FunFam" id="3.40.50.300:FF:000106">
    <property type="entry name" value="Adenylate kinase mitochondrial"/>
    <property type="match status" value="1"/>
</dbReference>
<dbReference type="Gene3D" id="3.40.50.300">
    <property type="entry name" value="P-loop containing nucleotide triphosphate hydrolases"/>
    <property type="match status" value="1"/>
</dbReference>
<dbReference type="HAMAP" id="MF_00235">
    <property type="entry name" value="Adenylate_kinase_Adk"/>
    <property type="match status" value="1"/>
</dbReference>
<dbReference type="InterPro" id="IPR006259">
    <property type="entry name" value="Adenyl_kin_sub"/>
</dbReference>
<dbReference type="InterPro" id="IPR000850">
    <property type="entry name" value="Adenylat/UMP-CMP_kin"/>
</dbReference>
<dbReference type="InterPro" id="IPR033690">
    <property type="entry name" value="Adenylat_kinase_CS"/>
</dbReference>
<dbReference type="InterPro" id="IPR007862">
    <property type="entry name" value="Adenylate_kinase_lid-dom"/>
</dbReference>
<dbReference type="InterPro" id="IPR027417">
    <property type="entry name" value="P-loop_NTPase"/>
</dbReference>
<dbReference type="NCBIfam" id="TIGR01351">
    <property type="entry name" value="adk"/>
    <property type="match status" value="1"/>
</dbReference>
<dbReference type="NCBIfam" id="NF001380">
    <property type="entry name" value="PRK00279.1-2"/>
    <property type="match status" value="1"/>
</dbReference>
<dbReference type="NCBIfam" id="NF001381">
    <property type="entry name" value="PRK00279.1-3"/>
    <property type="match status" value="1"/>
</dbReference>
<dbReference type="NCBIfam" id="NF011100">
    <property type="entry name" value="PRK14527.1"/>
    <property type="match status" value="1"/>
</dbReference>
<dbReference type="PANTHER" id="PTHR23359">
    <property type="entry name" value="NUCLEOTIDE KINASE"/>
    <property type="match status" value="1"/>
</dbReference>
<dbReference type="Pfam" id="PF00406">
    <property type="entry name" value="ADK"/>
    <property type="match status" value="1"/>
</dbReference>
<dbReference type="Pfam" id="PF05191">
    <property type="entry name" value="ADK_lid"/>
    <property type="match status" value="1"/>
</dbReference>
<dbReference type="PRINTS" id="PR00094">
    <property type="entry name" value="ADENYLTKNASE"/>
</dbReference>
<dbReference type="SUPFAM" id="SSF52540">
    <property type="entry name" value="P-loop containing nucleoside triphosphate hydrolases"/>
    <property type="match status" value="1"/>
</dbReference>
<dbReference type="PROSITE" id="PS00113">
    <property type="entry name" value="ADENYLATE_KINASE"/>
    <property type="match status" value="1"/>
</dbReference>
<keyword id="KW-0067">ATP-binding</keyword>
<keyword id="KW-0963">Cytoplasm</keyword>
<keyword id="KW-0418">Kinase</keyword>
<keyword id="KW-0479">Metal-binding</keyword>
<keyword id="KW-0545">Nucleotide biosynthesis</keyword>
<keyword id="KW-0547">Nucleotide-binding</keyword>
<keyword id="KW-0808">Transferase</keyword>
<keyword id="KW-0862">Zinc</keyword>
<gene>
    <name evidence="1" type="primary">adk</name>
    <name type="ordered locus">Mbar_A0086</name>
</gene>
<sequence length="215" mass="23958">MNIILFGPPGAGKGTQAKKMVDNYGIPQISTGDILRANVREGTELGLAAKEYMDKGELVPDEVLIGIIKNRLKEQDCEKGFILDGYPRTIPQADALAVILDEINKPIDVVLNLEVPDEELIERISGRLMCNCGASYHRTFNPPKKDDVCDICGGKVFQRADDKEEAVKNRLNVYKKQTEPLIDYYTKQGLLVTLDGTKDIDEVFEEIKAVLKKFA</sequence>
<name>KAD_METBF</name>
<reference key="1">
    <citation type="journal article" date="2006" name="J. Bacteriol.">
        <title>The Methanosarcina barkeri genome: comparative analysis with Methanosarcina acetivorans and Methanosarcina mazei reveals extensive rearrangement within methanosarcinal genomes.</title>
        <authorList>
            <person name="Maeder D.L."/>
            <person name="Anderson I."/>
            <person name="Brettin T.S."/>
            <person name="Bruce D.C."/>
            <person name="Gilna P."/>
            <person name="Han C.S."/>
            <person name="Lapidus A."/>
            <person name="Metcalf W.W."/>
            <person name="Saunders E."/>
            <person name="Tapia R."/>
            <person name="Sowers K.R."/>
        </authorList>
    </citation>
    <scope>NUCLEOTIDE SEQUENCE [LARGE SCALE GENOMIC DNA]</scope>
    <source>
        <strain>Fusaro / DSM 804</strain>
    </source>
</reference>
<accession>Q46GB9</accession>
<feature type="chain" id="PRO_1000021743" description="Adenylate kinase">
    <location>
        <begin position="1"/>
        <end position="215"/>
    </location>
</feature>
<feature type="region of interest" description="NMP" evidence="1">
    <location>
        <begin position="30"/>
        <end position="59"/>
    </location>
</feature>
<feature type="region of interest" description="LID" evidence="1">
    <location>
        <begin position="126"/>
        <end position="162"/>
    </location>
</feature>
<feature type="binding site" evidence="1">
    <location>
        <begin position="10"/>
        <end position="15"/>
    </location>
    <ligand>
        <name>ATP</name>
        <dbReference type="ChEBI" id="CHEBI:30616"/>
    </ligand>
</feature>
<feature type="binding site" evidence="1">
    <location>
        <position position="31"/>
    </location>
    <ligand>
        <name>AMP</name>
        <dbReference type="ChEBI" id="CHEBI:456215"/>
    </ligand>
</feature>
<feature type="binding site" evidence="1">
    <location>
        <position position="36"/>
    </location>
    <ligand>
        <name>AMP</name>
        <dbReference type="ChEBI" id="CHEBI:456215"/>
    </ligand>
</feature>
<feature type="binding site" evidence="1">
    <location>
        <begin position="57"/>
        <end position="59"/>
    </location>
    <ligand>
        <name>AMP</name>
        <dbReference type="ChEBI" id="CHEBI:456215"/>
    </ligand>
</feature>
<feature type="binding site" evidence="1">
    <location>
        <begin position="85"/>
        <end position="88"/>
    </location>
    <ligand>
        <name>AMP</name>
        <dbReference type="ChEBI" id="CHEBI:456215"/>
    </ligand>
</feature>
<feature type="binding site" evidence="1">
    <location>
        <position position="92"/>
    </location>
    <ligand>
        <name>AMP</name>
        <dbReference type="ChEBI" id="CHEBI:456215"/>
    </ligand>
</feature>
<feature type="binding site" evidence="1">
    <location>
        <position position="127"/>
    </location>
    <ligand>
        <name>ATP</name>
        <dbReference type="ChEBI" id="CHEBI:30616"/>
    </ligand>
</feature>
<feature type="binding site" evidence="1">
    <location>
        <position position="130"/>
    </location>
    <ligand>
        <name>Zn(2+)</name>
        <dbReference type="ChEBI" id="CHEBI:29105"/>
        <note>structural</note>
    </ligand>
</feature>
<feature type="binding site" evidence="1">
    <location>
        <position position="132"/>
    </location>
    <ligand>
        <name>Zn(2+)</name>
        <dbReference type="ChEBI" id="CHEBI:29105"/>
        <note>structural</note>
    </ligand>
</feature>
<feature type="binding site" evidence="1">
    <location>
        <begin position="135"/>
        <end position="136"/>
    </location>
    <ligand>
        <name>ATP</name>
        <dbReference type="ChEBI" id="CHEBI:30616"/>
    </ligand>
</feature>
<feature type="binding site" evidence="1">
    <location>
        <position position="149"/>
    </location>
    <ligand>
        <name>Zn(2+)</name>
        <dbReference type="ChEBI" id="CHEBI:29105"/>
        <note>structural</note>
    </ligand>
</feature>
<feature type="binding site" evidence="1">
    <location>
        <position position="152"/>
    </location>
    <ligand>
        <name>Zn(2+)</name>
        <dbReference type="ChEBI" id="CHEBI:29105"/>
        <note>structural</note>
    </ligand>
</feature>
<feature type="binding site" evidence="1">
    <location>
        <position position="159"/>
    </location>
    <ligand>
        <name>AMP</name>
        <dbReference type="ChEBI" id="CHEBI:456215"/>
    </ligand>
</feature>
<feature type="binding site" evidence="1">
    <location>
        <position position="170"/>
    </location>
    <ligand>
        <name>AMP</name>
        <dbReference type="ChEBI" id="CHEBI:456215"/>
    </ligand>
</feature>
<feature type="binding site" evidence="1">
    <location>
        <position position="198"/>
    </location>
    <ligand>
        <name>ATP</name>
        <dbReference type="ChEBI" id="CHEBI:30616"/>
    </ligand>
</feature>
<evidence type="ECO:0000255" key="1">
    <source>
        <dbReference type="HAMAP-Rule" id="MF_00235"/>
    </source>
</evidence>
<organism>
    <name type="scientific">Methanosarcina barkeri (strain Fusaro / DSM 804)</name>
    <dbReference type="NCBI Taxonomy" id="269797"/>
    <lineage>
        <taxon>Archaea</taxon>
        <taxon>Methanobacteriati</taxon>
        <taxon>Methanobacteriota</taxon>
        <taxon>Stenosarchaea group</taxon>
        <taxon>Methanomicrobia</taxon>
        <taxon>Methanosarcinales</taxon>
        <taxon>Methanosarcinaceae</taxon>
        <taxon>Methanosarcina</taxon>
    </lineage>
</organism>
<proteinExistence type="inferred from homology"/>
<protein>
    <recommendedName>
        <fullName evidence="1">Adenylate kinase</fullName>
        <shortName evidence="1">AK</shortName>
        <ecNumber evidence="1">2.7.4.3</ecNumber>
    </recommendedName>
    <alternativeName>
        <fullName evidence="1">ATP-AMP transphosphorylase</fullName>
    </alternativeName>
    <alternativeName>
        <fullName evidence="1">ATP:AMP phosphotransferase</fullName>
    </alternativeName>
    <alternativeName>
        <fullName evidence="1">Adenylate monophosphate kinase</fullName>
    </alternativeName>
</protein>
<comment type="function">
    <text evidence="1">Catalyzes the reversible transfer of the terminal phosphate group between ATP and AMP. Plays an important role in cellular energy homeostasis and in adenine nucleotide metabolism.</text>
</comment>
<comment type="catalytic activity">
    <reaction evidence="1">
        <text>AMP + ATP = 2 ADP</text>
        <dbReference type="Rhea" id="RHEA:12973"/>
        <dbReference type="ChEBI" id="CHEBI:30616"/>
        <dbReference type="ChEBI" id="CHEBI:456215"/>
        <dbReference type="ChEBI" id="CHEBI:456216"/>
        <dbReference type="EC" id="2.7.4.3"/>
    </reaction>
</comment>
<comment type="pathway">
    <text evidence="1">Purine metabolism; AMP biosynthesis via salvage pathway; AMP from ADP: step 1/1.</text>
</comment>
<comment type="subunit">
    <text evidence="1">Monomer.</text>
</comment>
<comment type="subcellular location">
    <subcellularLocation>
        <location evidence="1">Cytoplasm</location>
    </subcellularLocation>
</comment>
<comment type="domain">
    <text evidence="1">Consists of three domains, a large central CORE domain and two small peripheral domains, NMPbind and LID, which undergo movements during catalysis. The LID domain closes over the site of phosphoryl transfer upon ATP binding. Assembling and dissambling the active center during each catalytic cycle provides an effective means to prevent ATP hydrolysis. Some bacteria have evolved a zinc-coordinating structure that stabilizes the LID domain.</text>
</comment>
<comment type="similarity">
    <text evidence="1">Belongs to the adenylate kinase family.</text>
</comment>